<comment type="function">
    <text evidence="1">Specifically catalyzes the cleavage of the D-lactyl ether substituent of MurNAc 6-phosphate, producing GlcNAc 6-phosphate and D-lactate.</text>
</comment>
<comment type="catalytic activity">
    <reaction evidence="1">
        <text>N-acetyl-D-muramate 6-phosphate + H2O = N-acetyl-D-glucosamine 6-phosphate + (R)-lactate</text>
        <dbReference type="Rhea" id="RHEA:26410"/>
        <dbReference type="ChEBI" id="CHEBI:15377"/>
        <dbReference type="ChEBI" id="CHEBI:16004"/>
        <dbReference type="ChEBI" id="CHEBI:57513"/>
        <dbReference type="ChEBI" id="CHEBI:58722"/>
        <dbReference type="EC" id="4.2.1.126"/>
    </reaction>
</comment>
<comment type="pathway">
    <text evidence="1">Amino-sugar metabolism; N-acetylmuramate degradation.</text>
</comment>
<comment type="subunit">
    <text evidence="1">Homodimer.</text>
</comment>
<comment type="miscellaneous">
    <text evidence="1">A lyase-type mechanism (elimination/hydration) is suggested for the cleavage of the lactyl ether bond of MurNAc 6-phosphate, with the formation of an alpha,beta-unsaturated aldehyde intermediate with (E)-stereochemistry, followed by the syn addition of water to give product.</text>
</comment>
<comment type="similarity">
    <text evidence="1">Belongs to the GCKR-like family. MurNAc-6-P etherase subfamily.</text>
</comment>
<feature type="chain" id="PRO_0000249609" description="N-acetylmuramic acid 6-phosphate etherase 1">
    <location>
        <begin position="1"/>
        <end position="304"/>
    </location>
</feature>
<feature type="domain" description="SIS" evidence="1">
    <location>
        <begin position="58"/>
        <end position="221"/>
    </location>
</feature>
<feature type="region of interest" description="Disordered" evidence="2">
    <location>
        <begin position="1"/>
        <end position="20"/>
    </location>
</feature>
<feature type="compositionally biased region" description="Polar residues" evidence="2">
    <location>
        <begin position="1"/>
        <end position="10"/>
    </location>
</feature>
<feature type="active site" description="Proton donor" evidence="1">
    <location>
        <position position="86"/>
    </location>
</feature>
<feature type="active site" evidence="1">
    <location>
        <position position="117"/>
    </location>
</feature>
<sequence length="304" mass="32519">MENSHLGSLTTERRNERSKRIHQAETIDMLKIMNDEDKTVAEAVQEVLPDVKTAVDYAVGSLKKGGRIIYIGAGTSGRLGVLDAAECPPTFSISPESVIGIIAGGEKALYNAVEGAEDHEAFGRRDLEAVNLSNNDTVIGIAASGRTPYVLGALKYAKKTGAKAISLTCNENSAISQAADHSIEVVVGPEVIAGSTRMKAATAHKMILNMISTAAMIKMGKVYENLMVDVKVSNDKLKERAIRIIQTVTGMPNETAAQALEMSNNQVKTAIIMLKTNEDAAAAEKLLEKSEGDIEKALSIYEKS</sequence>
<accession>Q65P54</accession>
<accession>Q62ZJ3</accession>
<protein>
    <recommendedName>
        <fullName evidence="1">N-acetylmuramic acid 6-phosphate etherase 1</fullName>
        <shortName evidence="1">MurNAc-6-P etherase 1</shortName>
        <ecNumber evidence="1">4.2.1.126</ecNumber>
    </recommendedName>
    <alternativeName>
        <fullName evidence="1">N-acetylmuramic acid 6-phosphate hydrolase 1</fullName>
    </alternativeName>
    <alternativeName>
        <fullName evidence="1">N-acetylmuramic acid 6-phosphate lyase 1</fullName>
    </alternativeName>
</protein>
<proteinExistence type="inferred from homology"/>
<gene>
    <name evidence="1" type="primary">murQ1</name>
    <name type="ordered locus">BLi00191</name>
    <name type="ordered locus">BL02720</name>
</gene>
<dbReference type="EC" id="4.2.1.126" evidence="1"/>
<dbReference type="EMBL" id="AE017333">
    <property type="protein sequence ID" value="AAU39160.1"/>
    <property type="molecule type" value="Genomic_DNA"/>
</dbReference>
<dbReference type="EMBL" id="CP000002">
    <property type="protein sequence ID" value="AAU21815.1"/>
    <property type="molecule type" value="Genomic_DNA"/>
</dbReference>
<dbReference type="SMR" id="Q65P54"/>
<dbReference type="STRING" id="279010.BL02720"/>
<dbReference type="KEGG" id="bld:BLi00191"/>
<dbReference type="KEGG" id="bli:BL02720"/>
<dbReference type="PATRIC" id="fig|279010.13.peg.176"/>
<dbReference type="eggNOG" id="COG2103">
    <property type="taxonomic scope" value="Bacteria"/>
</dbReference>
<dbReference type="HOGENOM" id="CLU_049049_1_1_9"/>
<dbReference type="UniPathway" id="UPA00342"/>
<dbReference type="Proteomes" id="UP000000606">
    <property type="component" value="Chromosome"/>
</dbReference>
<dbReference type="Bgee" id="BL02720">
    <property type="expression patterns" value="Expressed in testis"/>
</dbReference>
<dbReference type="GO" id="GO:0097367">
    <property type="term" value="F:carbohydrate derivative binding"/>
    <property type="evidence" value="ECO:0007669"/>
    <property type="project" value="InterPro"/>
</dbReference>
<dbReference type="GO" id="GO:0016835">
    <property type="term" value="F:carbon-oxygen lyase activity"/>
    <property type="evidence" value="ECO:0007669"/>
    <property type="project" value="UniProtKB-UniRule"/>
</dbReference>
<dbReference type="GO" id="GO:0016803">
    <property type="term" value="F:ether hydrolase activity"/>
    <property type="evidence" value="ECO:0007669"/>
    <property type="project" value="TreeGrafter"/>
</dbReference>
<dbReference type="GO" id="GO:0046348">
    <property type="term" value="P:amino sugar catabolic process"/>
    <property type="evidence" value="ECO:0007669"/>
    <property type="project" value="InterPro"/>
</dbReference>
<dbReference type="GO" id="GO:0097173">
    <property type="term" value="P:N-acetylmuramic acid catabolic process"/>
    <property type="evidence" value="ECO:0007669"/>
    <property type="project" value="UniProtKB-UniPathway"/>
</dbReference>
<dbReference type="GO" id="GO:0009254">
    <property type="term" value="P:peptidoglycan turnover"/>
    <property type="evidence" value="ECO:0007669"/>
    <property type="project" value="TreeGrafter"/>
</dbReference>
<dbReference type="CDD" id="cd05007">
    <property type="entry name" value="SIS_Etherase"/>
    <property type="match status" value="1"/>
</dbReference>
<dbReference type="FunFam" id="1.10.8.1080:FF:000001">
    <property type="entry name" value="N-acetylmuramic acid 6-phosphate etherase"/>
    <property type="match status" value="1"/>
</dbReference>
<dbReference type="FunFam" id="3.40.50.10490:FF:000014">
    <property type="entry name" value="N-acetylmuramic acid 6-phosphate etherase"/>
    <property type="match status" value="1"/>
</dbReference>
<dbReference type="Gene3D" id="1.10.8.1080">
    <property type="match status" value="1"/>
</dbReference>
<dbReference type="Gene3D" id="3.40.50.10490">
    <property type="entry name" value="Glucose-6-phosphate isomerase like protein, domain 1"/>
    <property type="match status" value="1"/>
</dbReference>
<dbReference type="HAMAP" id="MF_00068">
    <property type="entry name" value="MurQ"/>
    <property type="match status" value="1"/>
</dbReference>
<dbReference type="InterPro" id="IPR005488">
    <property type="entry name" value="Etherase_MurQ"/>
</dbReference>
<dbReference type="InterPro" id="IPR005486">
    <property type="entry name" value="Glucokinase_regulatory_CS"/>
</dbReference>
<dbReference type="InterPro" id="IPR040190">
    <property type="entry name" value="MURQ/GCKR"/>
</dbReference>
<dbReference type="InterPro" id="IPR001347">
    <property type="entry name" value="SIS_dom"/>
</dbReference>
<dbReference type="InterPro" id="IPR046348">
    <property type="entry name" value="SIS_dom_sf"/>
</dbReference>
<dbReference type="NCBIfam" id="TIGR00274">
    <property type="entry name" value="N-acetylmuramic acid 6-phosphate etherase"/>
    <property type="match status" value="1"/>
</dbReference>
<dbReference type="NCBIfam" id="NF003915">
    <property type="entry name" value="PRK05441.1"/>
    <property type="match status" value="1"/>
</dbReference>
<dbReference type="NCBIfam" id="NF009222">
    <property type="entry name" value="PRK12570.1"/>
    <property type="match status" value="1"/>
</dbReference>
<dbReference type="PANTHER" id="PTHR10088">
    <property type="entry name" value="GLUCOKINASE REGULATORY PROTEIN"/>
    <property type="match status" value="1"/>
</dbReference>
<dbReference type="PANTHER" id="PTHR10088:SF4">
    <property type="entry name" value="GLUCOKINASE REGULATORY PROTEIN"/>
    <property type="match status" value="1"/>
</dbReference>
<dbReference type="Pfam" id="PF20741">
    <property type="entry name" value="GKRP-like_C"/>
    <property type="match status" value="1"/>
</dbReference>
<dbReference type="Pfam" id="PF22645">
    <property type="entry name" value="GKRP_SIS_N"/>
    <property type="match status" value="1"/>
</dbReference>
<dbReference type="SUPFAM" id="SSF53697">
    <property type="entry name" value="SIS domain"/>
    <property type="match status" value="1"/>
</dbReference>
<dbReference type="PROSITE" id="PS01272">
    <property type="entry name" value="GCKR"/>
    <property type="match status" value="1"/>
</dbReference>
<dbReference type="PROSITE" id="PS51464">
    <property type="entry name" value="SIS"/>
    <property type="match status" value="1"/>
</dbReference>
<evidence type="ECO:0000255" key="1">
    <source>
        <dbReference type="HAMAP-Rule" id="MF_00068"/>
    </source>
</evidence>
<evidence type="ECO:0000256" key="2">
    <source>
        <dbReference type="SAM" id="MobiDB-lite"/>
    </source>
</evidence>
<reference key="1">
    <citation type="journal article" date="2004" name="J. Mol. Microbiol. Biotechnol.">
        <title>The complete genome sequence of Bacillus licheniformis DSM13, an organism with great industrial potential.</title>
        <authorList>
            <person name="Veith B."/>
            <person name="Herzberg C."/>
            <person name="Steckel S."/>
            <person name="Feesche J."/>
            <person name="Maurer K.H."/>
            <person name="Ehrenreich P."/>
            <person name="Baeumer S."/>
            <person name="Henne A."/>
            <person name="Liesegang H."/>
            <person name="Merkl R."/>
            <person name="Ehrenreich A."/>
            <person name="Gottschalk G."/>
        </authorList>
    </citation>
    <scope>NUCLEOTIDE SEQUENCE [LARGE SCALE GENOMIC DNA]</scope>
    <source>
        <strain>ATCC 14580 / DSM 13 / JCM 2505 / CCUG 7422 / NBRC 12200 / NCIMB 9375 / NCTC 10341 / NRRL NRS-1264 / Gibson 46</strain>
    </source>
</reference>
<reference key="2">
    <citation type="journal article" date="2004" name="Genome Biol.">
        <title>Complete genome sequence of the industrial bacterium Bacillus licheniformis and comparisons with closely related Bacillus species.</title>
        <authorList>
            <person name="Rey M.W."/>
            <person name="Ramaiya P."/>
            <person name="Nelson B.A."/>
            <person name="Brody-Karpin S.D."/>
            <person name="Zaretsky E.J."/>
            <person name="Tang M."/>
            <person name="Lopez de Leon A."/>
            <person name="Xiang H."/>
            <person name="Gusti V."/>
            <person name="Clausen I.G."/>
            <person name="Olsen P.B."/>
            <person name="Rasmussen M.D."/>
            <person name="Andersen J.T."/>
            <person name="Joergensen P.L."/>
            <person name="Larsen T.S."/>
            <person name="Sorokin A."/>
            <person name="Bolotin A."/>
            <person name="Lapidus A."/>
            <person name="Galleron N."/>
            <person name="Ehrlich S.D."/>
            <person name="Berka R.M."/>
        </authorList>
    </citation>
    <scope>NUCLEOTIDE SEQUENCE [LARGE SCALE GENOMIC DNA]</scope>
    <source>
        <strain>ATCC 14580 / DSM 13 / JCM 2505 / CCUG 7422 / NBRC 12200 / NCIMB 9375 / NCTC 10341 / NRRL NRS-1264 / Gibson 46</strain>
    </source>
</reference>
<name>MURQ1_BACLD</name>
<keyword id="KW-0119">Carbohydrate metabolism</keyword>
<keyword id="KW-0456">Lyase</keyword>
<keyword id="KW-1185">Reference proteome</keyword>
<organism>
    <name type="scientific">Bacillus licheniformis (strain ATCC 14580 / DSM 13 / JCM 2505 / CCUG 7422 / NBRC 12200 / NCIMB 9375 / NCTC 10341 / NRRL NRS-1264 / Gibson 46)</name>
    <dbReference type="NCBI Taxonomy" id="279010"/>
    <lineage>
        <taxon>Bacteria</taxon>
        <taxon>Bacillati</taxon>
        <taxon>Bacillota</taxon>
        <taxon>Bacilli</taxon>
        <taxon>Bacillales</taxon>
        <taxon>Bacillaceae</taxon>
        <taxon>Bacillus</taxon>
    </lineage>
</organism>